<comment type="function">
    <text evidence="1">Involved in the biosynthesis of the chorismate, which leads to the biosynthesis of aromatic amino acids. Catalyzes the reversible NADPH linked reduction of 3-dehydroshikimate (DHSA) to yield shikimate (SA).</text>
</comment>
<comment type="catalytic activity">
    <reaction evidence="1">
        <text>shikimate + NADP(+) = 3-dehydroshikimate + NADPH + H(+)</text>
        <dbReference type="Rhea" id="RHEA:17737"/>
        <dbReference type="ChEBI" id="CHEBI:15378"/>
        <dbReference type="ChEBI" id="CHEBI:16630"/>
        <dbReference type="ChEBI" id="CHEBI:36208"/>
        <dbReference type="ChEBI" id="CHEBI:57783"/>
        <dbReference type="ChEBI" id="CHEBI:58349"/>
        <dbReference type="EC" id="1.1.1.25"/>
    </reaction>
</comment>
<comment type="pathway">
    <text evidence="1">Metabolic intermediate biosynthesis; chorismate biosynthesis; chorismate from D-erythrose 4-phosphate and phosphoenolpyruvate: step 4/7.</text>
</comment>
<comment type="subunit">
    <text evidence="1">Homodimer.</text>
</comment>
<comment type="similarity">
    <text evidence="1">Belongs to the shikimate dehydrogenase family.</text>
</comment>
<evidence type="ECO:0000255" key="1">
    <source>
        <dbReference type="HAMAP-Rule" id="MF_00222"/>
    </source>
</evidence>
<protein>
    <recommendedName>
        <fullName evidence="1">Shikimate dehydrogenase (NADP(+))</fullName>
        <shortName evidence="1">SDH</shortName>
        <ecNumber evidence="1">1.1.1.25</ecNumber>
    </recommendedName>
</protein>
<keyword id="KW-0028">Amino-acid biosynthesis</keyword>
<keyword id="KW-0057">Aromatic amino acid biosynthesis</keyword>
<keyword id="KW-0521">NADP</keyword>
<keyword id="KW-0560">Oxidoreductase</keyword>
<reference key="1">
    <citation type="journal article" date="2005" name="J. Bacteriol.">
        <title>Insights on evolution of virulence and resistance from the complete genome analysis of an early methicillin-resistant Staphylococcus aureus strain and a biofilm-producing methicillin-resistant Staphylococcus epidermidis strain.</title>
        <authorList>
            <person name="Gill S.R."/>
            <person name="Fouts D.E."/>
            <person name="Archer G.L."/>
            <person name="Mongodin E.F."/>
            <person name="DeBoy R.T."/>
            <person name="Ravel J."/>
            <person name="Paulsen I.T."/>
            <person name="Kolonay J.F."/>
            <person name="Brinkac L.M."/>
            <person name="Beanan M.J."/>
            <person name="Dodson R.J."/>
            <person name="Daugherty S.C."/>
            <person name="Madupu R."/>
            <person name="Angiuoli S.V."/>
            <person name="Durkin A.S."/>
            <person name="Haft D.H."/>
            <person name="Vamathevan J.J."/>
            <person name="Khouri H."/>
            <person name="Utterback T.R."/>
            <person name="Lee C."/>
            <person name="Dimitrov G."/>
            <person name="Jiang L."/>
            <person name="Qin H."/>
            <person name="Weidman J."/>
            <person name="Tran K."/>
            <person name="Kang K.H."/>
            <person name="Hance I.R."/>
            <person name="Nelson K.E."/>
            <person name="Fraser C.M."/>
        </authorList>
    </citation>
    <scope>NUCLEOTIDE SEQUENCE [LARGE SCALE GENOMIC DNA]</scope>
    <source>
        <strain>COL</strain>
    </source>
</reference>
<proteinExistence type="inferred from homology"/>
<dbReference type="EC" id="1.1.1.25" evidence="1"/>
<dbReference type="EMBL" id="CP000046">
    <property type="protein sequence ID" value="AAW38268.1"/>
    <property type="molecule type" value="Genomic_DNA"/>
</dbReference>
<dbReference type="RefSeq" id="WP_000666761.1">
    <property type="nucleotide sequence ID" value="NZ_JBGOFO010000003.1"/>
</dbReference>
<dbReference type="SMR" id="Q5HFG5"/>
<dbReference type="KEGG" id="sac:SACOL1652"/>
<dbReference type="HOGENOM" id="CLU_044063_4_1_9"/>
<dbReference type="UniPathway" id="UPA00053">
    <property type="reaction ID" value="UER00087"/>
</dbReference>
<dbReference type="Proteomes" id="UP000000530">
    <property type="component" value="Chromosome"/>
</dbReference>
<dbReference type="GO" id="GO:0005829">
    <property type="term" value="C:cytosol"/>
    <property type="evidence" value="ECO:0007669"/>
    <property type="project" value="TreeGrafter"/>
</dbReference>
<dbReference type="GO" id="GO:0050661">
    <property type="term" value="F:NADP binding"/>
    <property type="evidence" value="ECO:0007669"/>
    <property type="project" value="InterPro"/>
</dbReference>
<dbReference type="GO" id="GO:0004764">
    <property type="term" value="F:shikimate 3-dehydrogenase (NADP+) activity"/>
    <property type="evidence" value="ECO:0007669"/>
    <property type="project" value="UniProtKB-UniRule"/>
</dbReference>
<dbReference type="GO" id="GO:0008652">
    <property type="term" value="P:amino acid biosynthetic process"/>
    <property type="evidence" value="ECO:0007669"/>
    <property type="project" value="UniProtKB-KW"/>
</dbReference>
<dbReference type="GO" id="GO:0009073">
    <property type="term" value="P:aromatic amino acid family biosynthetic process"/>
    <property type="evidence" value="ECO:0007669"/>
    <property type="project" value="UniProtKB-KW"/>
</dbReference>
<dbReference type="GO" id="GO:0009423">
    <property type="term" value="P:chorismate biosynthetic process"/>
    <property type="evidence" value="ECO:0007669"/>
    <property type="project" value="UniProtKB-UniRule"/>
</dbReference>
<dbReference type="GO" id="GO:0019632">
    <property type="term" value="P:shikimate metabolic process"/>
    <property type="evidence" value="ECO:0007669"/>
    <property type="project" value="InterPro"/>
</dbReference>
<dbReference type="CDD" id="cd01065">
    <property type="entry name" value="NAD_bind_Shikimate_DH"/>
    <property type="match status" value="1"/>
</dbReference>
<dbReference type="FunFam" id="3.40.50.10860:FF:000016">
    <property type="entry name" value="Shikimate dehydrogenase (NADP(+))"/>
    <property type="match status" value="1"/>
</dbReference>
<dbReference type="FunFam" id="3.40.50.720:FF:000445">
    <property type="entry name" value="Shikimate dehydrogenase (NADP(+))"/>
    <property type="match status" value="1"/>
</dbReference>
<dbReference type="Gene3D" id="3.40.50.10860">
    <property type="entry name" value="Leucine Dehydrogenase, chain A, domain 1"/>
    <property type="match status" value="1"/>
</dbReference>
<dbReference type="Gene3D" id="3.40.50.720">
    <property type="entry name" value="NAD(P)-binding Rossmann-like Domain"/>
    <property type="match status" value="1"/>
</dbReference>
<dbReference type="HAMAP" id="MF_00222">
    <property type="entry name" value="Shikimate_DH_AroE"/>
    <property type="match status" value="1"/>
</dbReference>
<dbReference type="InterPro" id="IPR046346">
    <property type="entry name" value="Aminoacid_DH-like_N_sf"/>
</dbReference>
<dbReference type="InterPro" id="IPR036291">
    <property type="entry name" value="NAD(P)-bd_dom_sf"/>
</dbReference>
<dbReference type="InterPro" id="IPR041121">
    <property type="entry name" value="SDH_C"/>
</dbReference>
<dbReference type="InterPro" id="IPR011342">
    <property type="entry name" value="Shikimate_DH"/>
</dbReference>
<dbReference type="InterPro" id="IPR013708">
    <property type="entry name" value="Shikimate_DH-bd_N"/>
</dbReference>
<dbReference type="InterPro" id="IPR022893">
    <property type="entry name" value="Shikimate_DH_fam"/>
</dbReference>
<dbReference type="InterPro" id="IPR006151">
    <property type="entry name" value="Shikm_DH/Glu-tRNA_Rdtase"/>
</dbReference>
<dbReference type="NCBIfam" id="TIGR00507">
    <property type="entry name" value="aroE"/>
    <property type="match status" value="1"/>
</dbReference>
<dbReference type="PANTHER" id="PTHR21089:SF1">
    <property type="entry name" value="BIFUNCTIONAL 3-DEHYDROQUINATE DEHYDRATASE_SHIKIMATE DEHYDROGENASE, CHLOROPLASTIC"/>
    <property type="match status" value="1"/>
</dbReference>
<dbReference type="PANTHER" id="PTHR21089">
    <property type="entry name" value="SHIKIMATE DEHYDROGENASE"/>
    <property type="match status" value="1"/>
</dbReference>
<dbReference type="Pfam" id="PF18317">
    <property type="entry name" value="SDH_C"/>
    <property type="match status" value="1"/>
</dbReference>
<dbReference type="Pfam" id="PF01488">
    <property type="entry name" value="Shikimate_DH"/>
    <property type="match status" value="1"/>
</dbReference>
<dbReference type="Pfam" id="PF08501">
    <property type="entry name" value="Shikimate_dh_N"/>
    <property type="match status" value="1"/>
</dbReference>
<dbReference type="SUPFAM" id="SSF53223">
    <property type="entry name" value="Aminoacid dehydrogenase-like, N-terminal domain"/>
    <property type="match status" value="1"/>
</dbReference>
<dbReference type="SUPFAM" id="SSF51735">
    <property type="entry name" value="NAD(P)-binding Rossmann-fold domains"/>
    <property type="match status" value="1"/>
</dbReference>
<organism>
    <name type="scientific">Staphylococcus aureus (strain COL)</name>
    <dbReference type="NCBI Taxonomy" id="93062"/>
    <lineage>
        <taxon>Bacteria</taxon>
        <taxon>Bacillati</taxon>
        <taxon>Bacillota</taxon>
        <taxon>Bacilli</taxon>
        <taxon>Bacillales</taxon>
        <taxon>Staphylococcaceae</taxon>
        <taxon>Staphylococcus</taxon>
    </lineage>
</organism>
<feature type="chain" id="PRO_0000136030" description="Shikimate dehydrogenase (NADP(+))">
    <location>
        <begin position="1"/>
        <end position="268"/>
    </location>
</feature>
<feature type="active site" description="Proton acceptor" evidence="1">
    <location>
        <position position="64"/>
    </location>
</feature>
<feature type="binding site" evidence="1">
    <location>
        <begin position="13"/>
        <end position="15"/>
    </location>
    <ligand>
        <name>shikimate</name>
        <dbReference type="ChEBI" id="CHEBI:36208"/>
    </ligand>
</feature>
<feature type="binding site" evidence="1">
    <location>
        <position position="60"/>
    </location>
    <ligand>
        <name>shikimate</name>
        <dbReference type="ChEBI" id="CHEBI:36208"/>
    </ligand>
</feature>
<feature type="binding site" evidence="1">
    <location>
        <position position="76"/>
    </location>
    <ligand>
        <name>NADP(+)</name>
        <dbReference type="ChEBI" id="CHEBI:58349"/>
    </ligand>
</feature>
<feature type="binding site" evidence="1">
    <location>
        <position position="85"/>
    </location>
    <ligand>
        <name>shikimate</name>
        <dbReference type="ChEBI" id="CHEBI:36208"/>
    </ligand>
</feature>
<feature type="binding site" evidence="1">
    <location>
        <position position="100"/>
    </location>
    <ligand>
        <name>shikimate</name>
        <dbReference type="ChEBI" id="CHEBI:36208"/>
    </ligand>
</feature>
<feature type="binding site" evidence="1">
    <location>
        <begin position="124"/>
        <end position="128"/>
    </location>
    <ligand>
        <name>NADP(+)</name>
        <dbReference type="ChEBI" id="CHEBI:58349"/>
    </ligand>
</feature>
<feature type="binding site" evidence="1">
    <location>
        <begin position="148"/>
        <end position="153"/>
    </location>
    <ligand>
        <name>NADP(+)</name>
        <dbReference type="ChEBI" id="CHEBI:58349"/>
    </ligand>
</feature>
<feature type="binding site" evidence="1">
    <location>
        <position position="209"/>
    </location>
    <ligand>
        <name>NADP(+)</name>
        <dbReference type="ChEBI" id="CHEBI:58349"/>
    </ligand>
</feature>
<feature type="binding site" evidence="1">
    <location>
        <position position="211"/>
    </location>
    <ligand>
        <name>shikimate</name>
        <dbReference type="ChEBI" id="CHEBI:36208"/>
    </ligand>
</feature>
<feature type="binding site" evidence="1">
    <location>
        <position position="232"/>
    </location>
    <ligand>
        <name>NADP(+)</name>
        <dbReference type="ChEBI" id="CHEBI:58349"/>
    </ligand>
</feature>
<accession>Q5HFG5</accession>
<name>AROE_STAAC</name>
<gene>
    <name evidence="1" type="primary">aroE</name>
    <name type="ordered locus">SACOL1652</name>
</gene>
<sequence length="268" mass="29879">MKFAVIGNPISHSLSPVMHRANFNSLGLDDTYEALNIPIEDFHLIKEIISKKELEGFNITIPHKERIIPYLDYVDEQAINAGAVNTVLIKDGKWIGYNTDGIGYVKGLHSVYPDLENAYILILGAGGASKGIAYELAKFVKPKLTVANRTMARFESWNLNINQISLADAEKYLAEFDIVINTTPAGMAGNNESIINLKHLSPNTLMSDIVYIPYKTPILEEAERKGNHIYNGLDMFVYQGAESFKIWTNKDADINSMKTAVLQQLKGE</sequence>